<accession>Q9N359</accession>
<name>CSN4_CAEEL</name>
<feature type="chain" id="PRO_0000120991" description="COP9 signalosome complex subunit 4">
    <location>
        <begin position="1"/>
        <end position="412"/>
    </location>
</feature>
<feature type="domain" description="PCI" evidence="1">
    <location>
        <begin position="216"/>
        <end position="378"/>
    </location>
</feature>
<proteinExistence type="evidence at protein level"/>
<protein>
    <recommendedName>
        <fullName>COP9 signalosome complex subunit 4</fullName>
        <shortName>Signalosome subunit 4</shortName>
    </recommendedName>
</protein>
<sequence length="412" mass="46133">MSGEIERSQEVAVIFAQDTDHKAQYEALAKLCNKYLPQNAMGRVDTAEIIKIIDTVIALETGSMVVSRQFVSLITERLDNQHLESECVKAISEGILAIIKTRTISYEDQVCILRLMLASLYEKEGRIKDAAQALIAINSDTSPKFNGPQAAKEGAKAQLCIRITKLLLDCSEIDEAEQYVNRTSILMVDLGANPDIQIEHKALQARVSDAKRRFVEAAQRYYELSATEQLPNSDKLTALGKAIVCVLLAKPGPQRSRLLTLIFKDERAPKCASFELIAKMYLTKVIHKDELEEFEHQLQDHQKADEHGESILKGVIQEHNITAISQLYINISFKTLGQLLGVDTEAAESMAGEMISSERLHGYIDQTNGILHFEDSNPMRVWDSQILSTLEQINKVSDMIVARHSEFAEFLT</sequence>
<dbReference type="EMBL" id="FO081813">
    <property type="protein sequence ID" value="CCD74073.1"/>
    <property type="molecule type" value="Genomic_DNA"/>
</dbReference>
<dbReference type="RefSeq" id="NP_500034.1">
    <property type="nucleotide sequence ID" value="NM_067633.7"/>
</dbReference>
<dbReference type="SMR" id="Q9N359"/>
<dbReference type="BioGRID" id="42085">
    <property type="interactions" value="27"/>
</dbReference>
<dbReference type="ComplexPortal" id="CPX-3386">
    <property type="entry name" value="COP9 signalosome complex"/>
</dbReference>
<dbReference type="DIP" id="DIP-27076N"/>
<dbReference type="FunCoup" id="Q9N359">
    <property type="interactions" value="3132"/>
</dbReference>
<dbReference type="IntAct" id="Q9N359">
    <property type="interactions" value="13"/>
</dbReference>
<dbReference type="STRING" id="6239.Y55F3AM.15.1"/>
<dbReference type="PaxDb" id="6239-Y55F3AM.15"/>
<dbReference type="PeptideAtlas" id="Q9N359"/>
<dbReference type="EnsemblMetazoa" id="Y55F3AM.15.1">
    <property type="protein sequence ID" value="Y55F3AM.15.1"/>
    <property type="gene ID" value="WBGene00000816"/>
</dbReference>
<dbReference type="GeneID" id="176927"/>
<dbReference type="KEGG" id="cel:CELE_Y55F3AM.15"/>
<dbReference type="UCSC" id="Y55F3AM.15">
    <property type="organism name" value="c. elegans"/>
</dbReference>
<dbReference type="AGR" id="WB:WBGene00000816"/>
<dbReference type="CTD" id="176927"/>
<dbReference type="WormBase" id="Y55F3AM.15">
    <property type="protein sequence ID" value="CE25482"/>
    <property type="gene ID" value="WBGene00000816"/>
    <property type="gene designation" value="csn-4"/>
</dbReference>
<dbReference type="eggNOG" id="KOG1497">
    <property type="taxonomic scope" value="Eukaryota"/>
</dbReference>
<dbReference type="GeneTree" id="ENSGT00940000153510"/>
<dbReference type="HOGENOM" id="CLU_028132_1_0_1"/>
<dbReference type="InParanoid" id="Q9N359"/>
<dbReference type="OMA" id="WVAEIDE"/>
<dbReference type="OrthoDB" id="295656at2759"/>
<dbReference type="PhylomeDB" id="Q9N359"/>
<dbReference type="Reactome" id="R-CEL-5696394">
    <property type="pathway name" value="DNA Damage Recognition in GG-NER"/>
</dbReference>
<dbReference type="Reactome" id="R-CEL-6781823">
    <property type="pathway name" value="Formation of TC-NER Pre-Incision Complex"/>
</dbReference>
<dbReference type="Reactome" id="R-CEL-8856825">
    <property type="pathway name" value="Cargo recognition for clathrin-mediated endocytosis"/>
</dbReference>
<dbReference type="Reactome" id="R-CEL-8951664">
    <property type="pathway name" value="Neddylation"/>
</dbReference>
<dbReference type="SignaLink" id="Q9N359"/>
<dbReference type="PRO" id="PR:Q9N359"/>
<dbReference type="Proteomes" id="UP000001940">
    <property type="component" value="Chromosome IV"/>
</dbReference>
<dbReference type="Bgee" id="WBGene00000816">
    <property type="expression patterns" value="Expressed in embryo and 4 other cell types or tissues"/>
</dbReference>
<dbReference type="GO" id="GO:0008180">
    <property type="term" value="C:COP9 signalosome"/>
    <property type="evidence" value="ECO:0000353"/>
    <property type="project" value="ComplexPortal"/>
</dbReference>
<dbReference type="GO" id="GO:0005737">
    <property type="term" value="C:cytoplasm"/>
    <property type="evidence" value="ECO:0000303"/>
    <property type="project" value="ComplexPortal"/>
</dbReference>
<dbReference type="GO" id="GO:0005634">
    <property type="term" value="C:nucleus"/>
    <property type="evidence" value="ECO:0000303"/>
    <property type="project" value="ComplexPortal"/>
</dbReference>
<dbReference type="GO" id="GO:0060184">
    <property type="term" value="P:cell cycle switching"/>
    <property type="evidence" value="ECO:0000315"/>
    <property type="project" value="ComplexPortal"/>
</dbReference>
<dbReference type="GO" id="GO:0048477">
    <property type="term" value="P:oogenesis"/>
    <property type="evidence" value="ECO:0007669"/>
    <property type="project" value="UniProtKB-KW"/>
</dbReference>
<dbReference type="GO" id="GO:1905879">
    <property type="term" value="P:regulation of oogenesis"/>
    <property type="evidence" value="ECO:0000315"/>
    <property type="project" value="ComplexPortal"/>
</dbReference>
<dbReference type="Gene3D" id="1.10.10.10">
    <property type="entry name" value="Winged helix-like DNA-binding domain superfamily/Winged helix DNA-binding domain"/>
    <property type="match status" value="1"/>
</dbReference>
<dbReference type="InterPro" id="IPR000717">
    <property type="entry name" value="PCI_dom"/>
</dbReference>
<dbReference type="InterPro" id="IPR054559">
    <property type="entry name" value="PSMD12-CSN4-like_N"/>
</dbReference>
<dbReference type="InterPro" id="IPR040134">
    <property type="entry name" value="PSMD12/CSN4"/>
</dbReference>
<dbReference type="InterPro" id="IPR036388">
    <property type="entry name" value="WH-like_DNA-bd_sf"/>
</dbReference>
<dbReference type="InterPro" id="IPR036390">
    <property type="entry name" value="WH_DNA-bd_sf"/>
</dbReference>
<dbReference type="PANTHER" id="PTHR10855">
    <property type="entry name" value="26S PROTEASOME NON-ATPASE REGULATORY SUBUNIT 12/COP9 SIGNALOSOME COMPLEX SUBUNIT 4"/>
    <property type="match status" value="1"/>
</dbReference>
<dbReference type="PANTHER" id="PTHR10855:SF2">
    <property type="entry name" value="COP9 SIGNALOSOME COMPLEX SUBUNIT 4"/>
    <property type="match status" value="1"/>
</dbReference>
<dbReference type="Pfam" id="PF01399">
    <property type="entry name" value="PCI"/>
    <property type="match status" value="1"/>
</dbReference>
<dbReference type="Pfam" id="PF22241">
    <property type="entry name" value="PSMD12-CSN4_N"/>
    <property type="match status" value="1"/>
</dbReference>
<dbReference type="SMART" id="SM00088">
    <property type="entry name" value="PINT"/>
    <property type="match status" value="1"/>
</dbReference>
<dbReference type="SUPFAM" id="SSF46785">
    <property type="entry name" value="Winged helix' DNA-binding domain"/>
    <property type="match status" value="1"/>
</dbReference>
<dbReference type="PROSITE" id="PS50250">
    <property type="entry name" value="PCI"/>
    <property type="match status" value="1"/>
</dbReference>
<comment type="function">
    <text evidence="2">Component of the COP9 signalosome complex (CSN), a complex involved in various cellular and developmental processes. The CSN complex is an essential regulator of the ubiquitin (Ubl) conjugation pathway by mediating the deneddylation of the cullin subunits of the SCF-type E3 ligase complexes, leading to decrease the Ubl ligase activity of SCF. The CSN complex plays an essential role in embryogenesis and oogenesis and is required to regulate microtubule stability in the early embryo. Mediates mei-3/katanin targeting for degradation at the meiosis to mitosis transition via deneddylation of cul-3.</text>
</comment>
<comment type="subunit">
    <text evidence="2">Component of the CSN complex, probably composed of csn-1, csn-2, csn-3, csn-4, csn-5, csn-6 and csn-7. Within the complex it probably interacts directly with csn-2 and csn-4. In the complex, it probably interacts directly with csn-1, csn-2, csn-3 and csn-6. Interacts with itself.</text>
</comment>
<comment type="interaction">
    <interactant intactId="EBI-331347">
        <id>Q9N359</id>
    </interactant>
    <interactant intactId="EBI-318834">
        <id>Q94261</id>
        <label>cif-1</label>
    </interactant>
    <organismsDiffer>false</organismsDiffer>
    <experiments>3</experiments>
</comment>
<comment type="interaction">
    <interactant intactId="EBI-331347">
        <id>Q9N359</id>
    </interactant>
    <interactant intactId="EBI-331413">
        <id>O01422</id>
        <label>csn-2</label>
    </interactant>
    <organismsDiffer>false</organismsDiffer>
    <experiments>3</experiments>
</comment>
<comment type="subcellular location">
    <subcellularLocation>
        <location evidence="2">Cytoplasm</location>
    </subcellularLocation>
    <subcellularLocation>
        <location evidence="2">Nucleus</location>
    </subcellularLocation>
</comment>
<comment type="similarity">
    <text evidence="3">Belongs to the CSN4 family.</text>
</comment>
<organism>
    <name type="scientific">Caenorhabditis elegans</name>
    <dbReference type="NCBI Taxonomy" id="6239"/>
    <lineage>
        <taxon>Eukaryota</taxon>
        <taxon>Metazoa</taxon>
        <taxon>Ecdysozoa</taxon>
        <taxon>Nematoda</taxon>
        <taxon>Chromadorea</taxon>
        <taxon>Rhabditida</taxon>
        <taxon>Rhabditina</taxon>
        <taxon>Rhabditomorpha</taxon>
        <taxon>Rhabditoidea</taxon>
        <taxon>Rhabditidae</taxon>
        <taxon>Peloderinae</taxon>
        <taxon>Caenorhabditis</taxon>
    </lineage>
</organism>
<reference key="1">
    <citation type="journal article" date="1998" name="Science">
        <title>Genome sequence of the nematode C. elegans: a platform for investigating biology.</title>
        <authorList>
            <consortium name="The C. elegans sequencing consortium"/>
        </authorList>
    </citation>
    <scope>NUCLEOTIDE SEQUENCE [LARGE SCALE GENOMIC DNA]</scope>
    <source>
        <strain>Bristol N2</strain>
    </source>
</reference>
<reference key="2">
    <citation type="journal article" date="2003" name="Curr. Biol.">
        <title>Neddylation and deneddylation of CUL-3 is required to target MEI-1/katanin for degradation at the meiosis-to-mitosis transition in C. elegans.</title>
        <authorList>
            <person name="Pintard L."/>
            <person name="Kurz T."/>
            <person name="Glaser S."/>
            <person name="Willis J.H."/>
            <person name="Peter M."/>
            <person name="Bowerman B."/>
        </authorList>
    </citation>
    <scope>FUNCTION</scope>
    <scope>SUBCELLULAR LOCATION</scope>
    <scope>INTERACTION WITH CSN-1; CSN-2; CSN-3 AND CSN-6</scope>
</reference>
<evidence type="ECO:0000255" key="1">
    <source>
        <dbReference type="PROSITE-ProRule" id="PRU01185"/>
    </source>
</evidence>
<evidence type="ECO:0000269" key="2">
    <source>
    </source>
</evidence>
<evidence type="ECO:0000305" key="3"/>
<keyword id="KW-0963">Cytoplasm</keyword>
<keyword id="KW-0217">Developmental protein</keyword>
<keyword id="KW-0221">Differentiation</keyword>
<keyword id="KW-0539">Nucleus</keyword>
<keyword id="KW-0896">Oogenesis</keyword>
<keyword id="KW-1185">Reference proteome</keyword>
<keyword id="KW-0736">Signalosome</keyword>
<gene>
    <name type="primary">csn-4</name>
    <name type="ORF">Y55F3AM.15</name>
</gene>